<evidence type="ECO:0000255" key="1">
    <source>
        <dbReference type="HAMAP-Rule" id="MF_01456"/>
    </source>
</evidence>
<reference key="1">
    <citation type="submission" date="2007-04" db="EMBL/GenBank/DDBJ databases">
        <title>Complete sequence of Roseiflexus sp. RS-1.</title>
        <authorList>
            <consortium name="US DOE Joint Genome Institute"/>
            <person name="Copeland A."/>
            <person name="Lucas S."/>
            <person name="Lapidus A."/>
            <person name="Barry K."/>
            <person name="Detter J.C."/>
            <person name="Glavina del Rio T."/>
            <person name="Hammon N."/>
            <person name="Israni S."/>
            <person name="Dalin E."/>
            <person name="Tice H."/>
            <person name="Pitluck S."/>
            <person name="Chertkov O."/>
            <person name="Brettin T."/>
            <person name="Bruce D."/>
            <person name="Han C."/>
            <person name="Schmutz J."/>
            <person name="Larimer F."/>
            <person name="Land M."/>
            <person name="Hauser L."/>
            <person name="Kyrpides N."/>
            <person name="Mikhailova N."/>
            <person name="Bryant D.A."/>
            <person name="Richardson P."/>
        </authorList>
    </citation>
    <scope>NUCLEOTIDE SEQUENCE [LARGE SCALE GENOMIC DNA]</scope>
    <source>
        <strain>RS-1</strain>
    </source>
</reference>
<proteinExistence type="inferred from homology"/>
<feature type="chain" id="PRO_0000390212" description="NADH-quinone oxidoreductase subunit K">
    <location>
        <begin position="1"/>
        <end position="100"/>
    </location>
</feature>
<feature type="transmembrane region" description="Helical" evidence="1">
    <location>
        <begin position="4"/>
        <end position="24"/>
    </location>
</feature>
<feature type="transmembrane region" description="Helical" evidence="1">
    <location>
        <begin position="29"/>
        <end position="49"/>
    </location>
</feature>
<feature type="transmembrane region" description="Helical" evidence="1">
    <location>
        <begin position="60"/>
        <end position="80"/>
    </location>
</feature>
<gene>
    <name evidence="1" type="primary">nuoK</name>
    <name type="ordered locus">RoseRS_2233</name>
</gene>
<sequence length="100" mass="10739">MVPTSYYILLSALLFTLGVAGVLIRRNALVLFMSVELMLNSANLALVTFAMARQDIAGQIVVFFVIVVAAAEVAVGLALLVAIFRTKQTTDVDEIHSLKG</sequence>
<comment type="function">
    <text evidence="1">NDH-1 shuttles electrons from NADH, via FMN and iron-sulfur (Fe-S) centers, to quinones in the respiratory chain. The immediate electron acceptor for the enzyme in this species is believed to be ubiquinone. Couples the redox reaction to proton translocation (for every two electrons transferred, four hydrogen ions are translocated across the cytoplasmic membrane), and thus conserves the redox energy in a proton gradient.</text>
</comment>
<comment type="catalytic activity">
    <reaction evidence="1">
        <text>a quinone + NADH + 5 H(+)(in) = a quinol + NAD(+) + 4 H(+)(out)</text>
        <dbReference type="Rhea" id="RHEA:57888"/>
        <dbReference type="ChEBI" id="CHEBI:15378"/>
        <dbReference type="ChEBI" id="CHEBI:24646"/>
        <dbReference type="ChEBI" id="CHEBI:57540"/>
        <dbReference type="ChEBI" id="CHEBI:57945"/>
        <dbReference type="ChEBI" id="CHEBI:132124"/>
    </reaction>
</comment>
<comment type="subunit">
    <text evidence="1">NDH-1 is composed of 14 different subunits. Subunits NuoA, H, J, K, L, M, N constitute the membrane sector of the complex.</text>
</comment>
<comment type="subcellular location">
    <subcellularLocation>
        <location evidence="1">Cell membrane</location>
        <topology evidence="1">Multi-pass membrane protein</topology>
    </subcellularLocation>
</comment>
<comment type="similarity">
    <text evidence="1">Belongs to the complex I subunit 4L family.</text>
</comment>
<organism>
    <name type="scientific">Roseiflexus sp. (strain RS-1)</name>
    <dbReference type="NCBI Taxonomy" id="357808"/>
    <lineage>
        <taxon>Bacteria</taxon>
        <taxon>Bacillati</taxon>
        <taxon>Chloroflexota</taxon>
        <taxon>Chloroflexia</taxon>
        <taxon>Chloroflexales</taxon>
        <taxon>Roseiflexineae</taxon>
        <taxon>Roseiflexaceae</taxon>
        <taxon>Roseiflexus</taxon>
    </lineage>
</organism>
<accession>A5UVF9</accession>
<keyword id="KW-1003">Cell membrane</keyword>
<keyword id="KW-0472">Membrane</keyword>
<keyword id="KW-0520">NAD</keyword>
<keyword id="KW-0874">Quinone</keyword>
<keyword id="KW-1278">Translocase</keyword>
<keyword id="KW-0812">Transmembrane</keyword>
<keyword id="KW-1133">Transmembrane helix</keyword>
<keyword id="KW-0813">Transport</keyword>
<keyword id="KW-0830">Ubiquinone</keyword>
<protein>
    <recommendedName>
        <fullName evidence="1">NADH-quinone oxidoreductase subunit K</fullName>
        <ecNumber evidence="1">7.1.1.-</ecNumber>
    </recommendedName>
    <alternativeName>
        <fullName evidence="1">NADH dehydrogenase I subunit K</fullName>
    </alternativeName>
    <alternativeName>
        <fullName evidence="1">NDH-1 subunit K</fullName>
    </alternativeName>
</protein>
<dbReference type="EC" id="7.1.1.-" evidence="1"/>
<dbReference type="EMBL" id="CP000686">
    <property type="protein sequence ID" value="ABQ90612.1"/>
    <property type="molecule type" value="Genomic_DNA"/>
</dbReference>
<dbReference type="RefSeq" id="WP_011956958.1">
    <property type="nucleotide sequence ID" value="NC_009523.1"/>
</dbReference>
<dbReference type="SMR" id="A5UVF9"/>
<dbReference type="STRING" id="357808.RoseRS_2233"/>
<dbReference type="KEGG" id="rrs:RoseRS_2233"/>
<dbReference type="eggNOG" id="COG0713">
    <property type="taxonomic scope" value="Bacteria"/>
</dbReference>
<dbReference type="HOGENOM" id="CLU_144724_0_0_0"/>
<dbReference type="OrthoDB" id="9810120at2"/>
<dbReference type="Proteomes" id="UP000006554">
    <property type="component" value="Chromosome"/>
</dbReference>
<dbReference type="GO" id="GO:0030964">
    <property type="term" value="C:NADH dehydrogenase complex"/>
    <property type="evidence" value="ECO:0007669"/>
    <property type="project" value="TreeGrafter"/>
</dbReference>
<dbReference type="GO" id="GO:0005886">
    <property type="term" value="C:plasma membrane"/>
    <property type="evidence" value="ECO:0007669"/>
    <property type="project" value="UniProtKB-SubCell"/>
</dbReference>
<dbReference type="GO" id="GO:0050136">
    <property type="term" value="F:NADH:ubiquinone reductase (non-electrogenic) activity"/>
    <property type="evidence" value="ECO:0007669"/>
    <property type="project" value="UniProtKB-UniRule"/>
</dbReference>
<dbReference type="GO" id="GO:0048038">
    <property type="term" value="F:quinone binding"/>
    <property type="evidence" value="ECO:0007669"/>
    <property type="project" value="UniProtKB-KW"/>
</dbReference>
<dbReference type="GO" id="GO:0042773">
    <property type="term" value="P:ATP synthesis coupled electron transport"/>
    <property type="evidence" value="ECO:0007669"/>
    <property type="project" value="InterPro"/>
</dbReference>
<dbReference type="FunFam" id="1.10.287.3510:FF:000001">
    <property type="entry name" value="NADH-quinone oxidoreductase subunit K"/>
    <property type="match status" value="1"/>
</dbReference>
<dbReference type="Gene3D" id="1.10.287.3510">
    <property type="match status" value="1"/>
</dbReference>
<dbReference type="HAMAP" id="MF_01456">
    <property type="entry name" value="NDH1_NuoK"/>
    <property type="match status" value="1"/>
</dbReference>
<dbReference type="InterPro" id="IPR001133">
    <property type="entry name" value="NADH_UbQ_OxRdtase_chain4L/K"/>
</dbReference>
<dbReference type="InterPro" id="IPR039428">
    <property type="entry name" value="NUOK/Mnh_C1-like"/>
</dbReference>
<dbReference type="NCBIfam" id="NF004320">
    <property type="entry name" value="PRK05715.1-2"/>
    <property type="match status" value="1"/>
</dbReference>
<dbReference type="NCBIfam" id="NF004321">
    <property type="entry name" value="PRK05715.1-3"/>
    <property type="match status" value="1"/>
</dbReference>
<dbReference type="NCBIfam" id="NF004323">
    <property type="entry name" value="PRK05715.1-5"/>
    <property type="match status" value="1"/>
</dbReference>
<dbReference type="PANTHER" id="PTHR11434:SF21">
    <property type="entry name" value="NADH DEHYDROGENASE SUBUNIT 4L-RELATED"/>
    <property type="match status" value="1"/>
</dbReference>
<dbReference type="PANTHER" id="PTHR11434">
    <property type="entry name" value="NADH-UBIQUINONE OXIDOREDUCTASE SUBUNIT ND4L"/>
    <property type="match status" value="1"/>
</dbReference>
<dbReference type="Pfam" id="PF00420">
    <property type="entry name" value="Oxidored_q2"/>
    <property type="match status" value="1"/>
</dbReference>
<name>NUOK_ROSS1</name>